<accession>P42456</accession>
<organism>
    <name type="scientific">Corynebacterium glutamicum (strain ATCC 13032 / DSM 20300 / JCM 1318 / BCRC 11384 / CCUG 27702 / LMG 3730 / NBRC 12168 / NCIMB 10025 / NRRL B-2784 / 534)</name>
    <dbReference type="NCBI Taxonomy" id="196627"/>
    <lineage>
        <taxon>Bacteria</taxon>
        <taxon>Bacillati</taxon>
        <taxon>Actinomycetota</taxon>
        <taxon>Actinomycetes</taxon>
        <taxon>Mycobacteriales</taxon>
        <taxon>Corynebacteriaceae</taxon>
        <taxon>Corynebacterium</taxon>
    </lineage>
</organism>
<reference key="1">
    <citation type="journal article" date="1994" name="Appl. Environ. Microbiol.">
        <title>Leucine synthesis in Corynebacterium glutamicum: enzyme activities, structure of leuA, and effect of leuA inactivation on lysine synthesis.</title>
        <authorList>
            <person name="Patek M."/>
            <person name="Krumbach K."/>
            <person name="Eggeling L."/>
            <person name="Sahm H."/>
        </authorList>
    </citation>
    <scope>NUCLEOTIDE SEQUENCE [GENOMIC DNA]</scope>
    <source>
        <strain>ATCC 13032 / DSM 20300 / JCM 1318 / BCRC 11384 / CCUG 27702 / LMG 3730 / NBRC 12168 / NCIMB 10025 / NRRL B-2784 / 534</strain>
    </source>
</reference>
<reference key="2">
    <citation type="journal article" date="2003" name="Appl. Microbiol. Biotechnol.">
        <title>The Corynebacterium glutamicum genome: features and impacts on biotechnological processes.</title>
        <authorList>
            <person name="Ikeda M."/>
            <person name="Nakagawa S."/>
        </authorList>
    </citation>
    <scope>NUCLEOTIDE SEQUENCE [LARGE SCALE GENOMIC DNA]</scope>
    <source>
        <strain>ATCC 13032 / DSM 20300 / JCM 1318 / BCRC 11384 / CCUG 27702 / LMG 3730 / NBRC 12168 / NCIMB 10025 / NRRL B-2784 / 534</strain>
    </source>
</reference>
<reference key="3">
    <citation type="journal article" date="2003" name="J. Biotechnol.">
        <title>The complete Corynebacterium glutamicum ATCC 13032 genome sequence and its impact on the production of L-aspartate-derived amino acids and vitamins.</title>
        <authorList>
            <person name="Kalinowski J."/>
            <person name="Bathe B."/>
            <person name="Bartels D."/>
            <person name="Bischoff N."/>
            <person name="Bott M."/>
            <person name="Burkovski A."/>
            <person name="Dusch N."/>
            <person name="Eggeling L."/>
            <person name="Eikmanns B.J."/>
            <person name="Gaigalat L."/>
            <person name="Goesmann A."/>
            <person name="Hartmann M."/>
            <person name="Huthmacher K."/>
            <person name="Kraemer R."/>
            <person name="Linke B."/>
            <person name="McHardy A.C."/>
            <person name="Meyer F."/>
            <person name="Moeckel B."/>
            <person name="Pfefferle W."/>
            <person name="Puehler A."/>
            <person name="Rey D.A."/>
            <person name="Rueckert C."/>
            <person name="Rupp O."/>
            <person name="Sahm H."/>
            <person name="Wendisch V.F."/>
            <person name="Wiegraebe I."/>
            <person name="Tauch A."/>
        </authorList>
    </citation>
    <scope>NUCLEOTIDE SEQUENCE [LARGE SCALE GENOMIC DNA]</scope>
    <source>
        <strain>ATCC 13032 / DSM 20300 / JCM 1318 / BCRC 11384 / CCUG 27702 / LMG 3730 / NBRC 12168 / NCIMB 10025 / NRRL B-2784 / 534</strain>
    </source>
</reference>
<name>LPL_CORGL</name>
<protein>
    <recommendedName>
        <fullName>leu leader peptide</fullName>
    </recommendedName>
    <alternativeName>
        <fullName>leuA operon attenuator peptide</fullName>
    </alternativeName>
</protein>
<gene>
    <name type="primary">leuL</name>
    <name type="ordered locus">Cgl0248.1</name>
    <name type="ordered locus">cg0303.1</name>
</gene>
<comment type="function">
    <text evidence="1">Involved in control of the biosynthesis of leucine.</text>
</comment>
<keyword id="KW-0028">Amino-acid biosynthesis</keyword>
<keyword id="KW-0100">Branched-chain amino acid biosynthesis</keyword>
<keyword id="KW-0428">Leader peptide</keyword>
<keyword id="KW-0432">Leucine biosynthesis</keyword>
<keyword id="KW-1185">Reference proteome</keyword>
<feature type="peptide" id="PRO_0000043994" description="leu leader peptide">
    <location>
        <begin position="1"/>
        <end position="22"/>
    </location>
</feature>
<feature type="region of interest" description="Disordered" evidence="2">
    <location>
        <begin position="1"/>
        <end position="22"/>
    </location>
</feature>
<feature type="compositionally biased region" description="Low complexity" evidence="2">
    <location>
        <begin position="11"/>
        <end position="22"/>
    </location>
</feature>
<dbReference type="EMBL" id="X70959">
    <property type="protein sequence ID" value="CAA50295.1"/>
    <property type="status" value="ALT_TERM"/>
    <property type="molecule type" value="Genomic_DNA"/>
</dbReference>
<dbReference type="EMBL" id="BA000036">
    <property type="status" value="NOT_ANNOTATED_CDS"/>
    <property type="molecule type" value="Genomic_DNA"/>
</dbReference>
<dbReference type="EMBL" id="BX927148">
    <property type="status" value="NOT_ANNOTATED_CDS"/>
    <property type="molecule type" value="Genomic_DNA"/>
</dbReference>
<dbReference type="PIR" id="I40725">
    <property type="entry name" value="I40725"/>
</dbReference>
<dbReference type="Proteomes" id="UP000000582">
    <property type="component" value="Chromosome"/>
</dbReference>
<dbReference type="Proteomes" id="UP000001009">
    <property type="component" value="Chromosome"/>
</dbReference>
<dbReference type="GO" id="GO:0009098">
    <property type="term" value="P:L-leucine biosynthetic process"/>
    <property type="evidence" value="ECO:0007669"/>
    <property type="project" value="UniProtKB-KW"/>
</dbReference>
<sequence>MLHHMTSRANLLLLRRGGSQRS</sequence>
<evidence type="ECO:0000250" key="1"/>
<evidence type="ECO:0000256" key="2">
    <source>
        <dbReference type="SAM" id="MobiDB-lite"/>
    </source>
</evidence>
<proteinExistence type="inferred from homology"/>